<accession>O50089</accession>
<dbReference type="EMBL" id="BA000001">
    <property type="protein sequence ID" value="BAA30487.1"/>
    <property type="molecule type" value="Genomic_DNA"/>
</dbReference>
<dbReference type="PIR" id="G71010">
    <property type="entry name" value="G71010"/>
</dbReference>
<dbReference type="RefSeq" id="WP_010885470.1">
    <property type="nucleotide sequence ID" value="NC_000961.1"/>
</dbReference>
<dbReference type="PDB" id="1IZ6">
    <property type="method" value="X-ray"/>
    <property type="resolution" value="2.00 A"/>
    <property type="chains" value="A/B/C=1-138"/>
</dbReference>
<dbReference type="PDBsum" id="1IZ6"/>
<dbReference type="SMR" id="O50089"/>
<dbReference type="STRING" id="70601.gene:9378357"/>
<dbReference type="EnsemblBacteria" id="BAA30487">
    <property type="protein sequence ID" value="BAA30487"/>
    <property type="gene ID" value="BAA30487"/>
</dbReference>
<dbReference type="GeneID" id="1443708"/>
<dbReference type="KEGG" id="pho:PH1381"/>
<dbReference type="eggNOG" id="arCOG04277">
    <property type="taxonomic scope" value="Archaea"/>
</dbReference>
<dbReference type="OrthoDB" id="23689at2157"/>
<dbReference type="EvolutionaryTrace" id="O50089"/>
<dbReference type="Proteomes" id="UP000000752">
    <property type="component" value="Chromosome"/>
</dbReference>
<dbReference type="GO" id="GO:0005737">
    <property type="term" value="C:cytoplasm"/>
    <property type="evidence" value="ECO:0007669"/>
    <property type="project" value="UniProtKB-SubCell"/>
</dbReference>
<dbReference type="GO" id="GO:0043022">
    <property type="term" value="F:ribosome binding"/>
    <property type="evidence" value="ECO:0007669"/>
    <property type="project" value="InterPro"/>
</dbReference>
<dbReference type="GO" id="GO:0003723">
    <property type="term" value="F:RNA binding"/>
    <property type="evidence" value="ECO:0007669"/>
    <property type="project" value="InterPro"/>
</dbReference>
<dbReference type="GO" id="GO:0003746">
    <property type="term" value="F:translation elongation factor activity"/>
    <property type="evidence" value="ECO:0007669"/>
    <property type="project" value="InterPro"/>
</dbReference>
<dbReference type="GO" id="GO:0003743">
    <property type="term" value="F:translation initiation factor activity"/>
    <property type="evidence" value="ECO:0007669"/>
    <property type="project" value="UniProtKB-UniRule"/>
</dbReference>
<dbReference type="GO" id="GO:0045901">
    <property type="term" value="P:positive regulation of translational elongation"/>
    <property type="evidence" value="ECO:0007669"/>
    <property type="project" value="InterPro"/>
</dbReference>
<dbReference type="GO" id="GO:0045905">
    <property type="term" value="P:positive regulation of translational termination"/>
    <property type="evidence" value="ECO:0007669"/>
    <property type="project" value="InterPro"/>
</dbReference>
<dbReference type="CDD" id="cd04467">
    <property type="entry name" value="S1_aIF5A"/>
    <property type="match status" value="1"/>
</dbReference>
<dbReference type="FunFam" id="2.30.30.30:FF:000038">
    <property type="entry name" value="Translation initiation factor 5A"/>
    <property type="match status" value="1"/>
</dbReference>
<dbReference type="FunFam" id="2.40.50.140:FF:000334">
    <property type="entry name" value="Translation initiation factor 5A"/>
    <property type="match status" value="1"/>
</dbReference>
<dbReference type="Gene3D" id="2.30.30.30">
    <property type="match status" value="1"/>
</dbReference>
<dbReference type="Gene3D" id="2.40.50.140">
    <property type="entry name" value="Nucleic acid-binding proteins"/>
    <property type="match status" value="1"/>
</dbReference>
<dbReference type="HAMAP" id="MF_00085">
    <property type="entry name" value="eIF_5A"/>
    <property type="match status" value="1"/>
</dbReference>
<dbReference type="InterPro" id="IPR001884">
    <property type="entry name" value="IF5A-like"/>
</dbReference>
<dbReference type="InterPro" id="IPR048670">
    <property type="entry name" value="IF5A-like_N"/>
</dbReference>
<dbReference type="InterPro" id="IPR012340">
    <property type="entry name" value="NA-bd_OB-fold"/>
</dbReference>
<dbReference type="InterPro" id="IPR014722">
    <property type="entry name" value="Rib_uL2_dom2"/>
</dbReference>
<dbReference type="InterPro" id="IPR019769">
    <property type="entry name" value="Trans_elong_IF5A_hypusine_site"/>
</dbReference>
<dbReference type="InterPro" id="IPR022847">
    <property type="entry name" value="Transl_elong_IF5A_arc"/>
</dbReference>
<dbReference type="InterPro" id="IPR020189">
    <property type="entry name" value="Transl_elong_IF5A_C"/>
</dbReference>
<dbReference type="InterPro" id="IPR008991">
    <property type="entry name" value="Translation_prot_SH3-like_sf"/>
</dbReference>
<dbReference type="NCBIfam" id="TIGR00037">
    <property type="entry name" value="eIF_5A"/>
    <property type="match status" value="1"/>
</dbReference>
<dbReference type="NCBIfam" id="NF003076">
    <property type="entry name" value="PRK03999.1"/>
    <property type="match status" value="1"/>
</dbReference>
<dbReference type="PANTHER" id="PTHR11673">
    <property type="entry name" value="TRANSLATION INITIATION FACTOR 5A FAMILY MEMBER"/>
    <property type="match status" value="1"/>
</dbReference>
<dbReference type="Pfam" id="PF01287">
    <property type="entry name" value="eIF-5a"/>
    <property type="match status" value="1"/>
</dbReference>
<dbReference type="Pfam" id="PF21485">
    <property type="entry name" value="IF5A-like_N"/>
    <property type="match status" value="1"/>
</dbReference>
<dbReference type="PIRSF" id="PIRSF003025">
    <property type="entry name" value="eIF5A"/>
    <property type="match status" value="1"/>
</dbReference>
<dbReference type="SMART" id="SM01376">
    <property type="entry name" value="eIF-5a"/>
    <property type="match status" value="1"/>
</dbReference>
<dbReference type="SUPFAM" id="SSF50249">
    <property type="entry name" value="Nucleic acid-binding proteins"/>
    <property type="match status" value="1"/>
</dbReference>
<dbReference type="SUPFAM" id="SSF50104">
    <property type="entry name" value="Translation proteins SH3-like domain"/>
    <property type="match status" value="1"/>
</dbReference>
<dbReference type="PROSITE" id="PS00302">
    <property type="entry name" value="IF5A_HYPUSINE"/>
    <property type="match status" value="1"/>
</dbReference>
<gene>
    <name type="primary">eif5a</name>
    <name type="ordered locus">PH1381</name>
</gene>
<sequence length="138" mass="15285">MGDKTKVQVSKLKPGRYIIIDDEPCRIVNITVSSPGKHGSAKARIEAVGIFDGKVRSIVKPTSAEVDVPIIDKKTAQVIAITPDTVQIMDMETYETFEVPIDTGVADEIRDQLKEGINVEYWETLGRIKIMRIKGEGE</sequence>
<proteinExistence type="evidence at protein level"/>
<keyword id="KW-0002">3D-structure</keyword>
<keyword id="KW-0963">Cytoplasm</keyword>
<keyword id="KW-0385">Hypusine</keyword>
<keyword id="KW-0396">Initiation factor</keyword>
<keyword id="KW-0648">Protein biosynthesis</keyword>
<reference key="1">
    <citation type="journal article" date="1998" name="DNA Res.">
        <title>Complete sequence and gene organization of the genome of a hyper-thermophilic archaebacterium, Pyrococcus horikoshii OT3.</title>
        <authorList>
            <person name="Kawarabayasi Y."/>
            <person name="Sawada M."/>
            <person name="Horikawa H."/>
            <person name="Haikawa Y."/>
            <person name="Hino Y."/>
            <person name="Yamamoto S."/>
            <person name="Sekine M."/>
            <person name="Baba S."/>
            <person name="Kosugi H."/>
            <person name="Hosoyama A."/>
            <person name="Nagai Y."/>
            <person name="Sakai M."/>
            <person name="Ogura K."/>
            <person name="Otsuka R."/>
            <person name="Nakazawa H."/>
            <person name="Takamiya M."/>
            <person name="Ohfuku Y."/>
            <person name="Funahashi T."/>
            <person name="Tanaka T."/>
            <person name="Kudoh Y."/>
            <person name="Yamazaki J."/>
            <person name="Kushida N."/>
            <person name="Oguchi A."/>
            <person name="Aoki K."/>
            <person name="Yoshizawa T."/>
            <person name="Nakamura Y."/>
            <person name="Robb F.T."/>
            <person name="Horikoshi K."/>
            <person name="Masuchi Y."/>
            <person name="Shizuya H."/>
            <person name="Kikuchi H."/>
        </authorList>
    </citation>
    <scope>NUCLEOTIDE SEQUENCE [LARGE SCALE GENOMIC DNA]</scope>
    <source>
        <strain>ATCC 700860 / DSM 12428 / JCM 9974 / NBRC 100139 / OT-3</strain>
    </source>
</reference>
<reference key="2">
    <citation type="journal article" date="2003" name="J. Biochem.">
        <title>Crystal structure of hyperthermophilic archaeal initiation factor 5A: a homologue of eukaryotic initiation factor 5A (eIF-5A).</title>
        <authorList>
            <person name="Yao M."/>
            <person name="Ohsawa A."/>
            <person name="Kikukawa S."/>
            <person name="Tanaka I."/>
            <person name="Kimura M."/>
        </authorList>
    </citation>
    <scope>X-RAY CRYSTALLOGRAPHY (2.0 ANGSTROMS)</scope>
    <scope>HYPUSINE AT LYS-37</scope>
    <source>
        <strain>ATCC 700860 / DSM 12428 / JCM 9974 / NBRC 100139 / OT-3</strain>
    </source>
</reference>
<name>IF5A_PYRHO</name>
<comment type="function">
    <text evidence="1">Functions by promoting the formation of the first peptide bond.</text>
</comment>
<comment type="subcellular location">
    <subcellularLocation>
        <location>Cytoplasm</location>
    </subcellularLocation>
</comment>
<comment type="similarity">
    <text evidence="3">Belongs to the eIF-5A family.</text>
</comment>
<feature type="chain" id="PRO_0000142501" description="Translation initiation factor 5A">
    <location>
        <begin position="1"/>
        <end position="138"/>
    </location>
</feature>
<feature type="modified residue" description="Hypusine" evidence="2">
    <location>
        <position position="37"/>
    </location>
</feature>
<feature type="strand" evidence="4">
    <location>
        <begin position="4"/>
        <end position="8"/>
    </location>
</feature>
<feature type="helix" evidence="4">
    <location>
        <begin position="9"/>
        <end position="11"/>
    </location>
</feature>
<feature type="strand" evidence="4">
    <location>
        <begin position="16"/>
        <end position="20"/>
    </location>
</feature>
<feature type="strand" evidence="4">
    <location>
        <begin position="23"/>
        <end position="32"/>
    </location>
</feature>
<feature type="strand" evidence="4">
    <location>
        <begin position="42"/>
        <end position="49"/>
    </location>
</feature>
<feature type="turn" evidence="4">
    <location>
        <begin position="50"/>
        <end position="52"/>
    </location>
</feature>
<feature type="strand" evidence="4">
    <location>
        <begin position="55"/>
        <end position="61"/>
    </location>
</feature>
<feature type="strand" evidence="4">
    <location>
        <begin position="64"/>
        <end position="69"/>
    </location>
</feature>
<feature type="strand" evidence="4">
    <location>
        <begin position="72"/>
        <end position="81"/>
    </location>
</feature>
<feature type="strand" evidence="4">
    <location>
        <begin position="83"/>
        <end position="89"/>
    </location>
</feature>
<feature type="turn" evidence="4">
    <location>
        <begin position="91"/>
        <end position="93"/>
    </location>
</feature>
<feature type="strand" evidence="4">
    <location>
        <begin position="96"/>
        <end position="100"/>
    </location>
</feature>
<feature type="helix" evidence="4">
    <location>
        <begin position="101"/>
        <end position="104"/>
    </location>
</feature>
<feature type="helix" evidence="4">
    <location>
        <begin position="107"/>
        <end position="109"/>
    </location>
</feature>
<feature type="turn" evidence="4">
    <location>
        <begin position="110"/>
        <end position="112"/>
    </location>
</feature>
<feature type="strand" evidence="4">
    <location>
        <begin position="118"/>
        <end position="124"/>
    </location>
</feature>
<feature type="strand" evidence="4">
    <location>
        <begin position="127"/>
        <end position="133"/>
    </location>
</feature>
<evidence type="ECO:0000250" key="1"/>
<evidence type="ECO:0000269" key="2">
    <source>
    </source>
</evidence>
<evidence type="ECO:0000305" key="3"/>
<evidence type="ECO:0007829" key="4">
    <source>
        <dbReference type="PDB" id="1IZ6"/>
    </source>
</evidence>
<protein>
    <recommendedName>
        <fullName>Translation initiation factor 5A</fullName>
    </recommendedName>
    <alternativeName>
        <fullName>Hypusine-containing protein</fullName>
    </alternativeName>
    <alternativeName>
        <fullName>PhoIF-5A</fullName>
    </alternativeName>
    <alternativeName>
        <fullName>eIF-5A</fullName>
    </alternativeName>
</protein>
<organism>
    <name type="scientific">Pyrococcus horikoshii (strain ATCC 700860 / DSM 12428 / JCM 9974 / NBRC 100139 / OT-3)</name>
    <dbReference type="NCBI Taxonomy" id="70601"/>
    <lineage>
        <taxon>Archaea</taxon>
        <taxon>Methanobacteriati</taxon>
        <taxon>Methanobacteriota</taxon>
        <taxon>Thermococci</taxon>
        <taxon>Thermococcales</taxon>
        <taxon>Thermococcaceae</taxon>
        <taxon>Pyrococcus</taxon>
    </lineage>
</organism>